<comment type="function">
    <text evidence="1">Variable subunit of the ferredoxin-thioredoxin reductase (FTR), which catalyzes the two-electron reduction of thioredoxins by the electrons provided by reduced ferredoxin.</text>
</comment>
<comment type="subunit">
    <text evidence="1">Heterodimer of subunit A (variable subunit) and subunit B (catalytic subunit). Heterodimeric FTR forms a complex with ferredoxin and thioredoxin.</text>
</comment>
<comment type="subcellular location">
    <subcellularLocation>
        <location evidence="2">Plastid</location>
        <location evidence="2">Chloroplast</location>
    </subcellularLocation>
</comment>
<comment type="disruption phenotype">
    <text evidence="3">Subtle developmental changes including slow development of young seedlings, an increased sensitivity to fluctuating culture conditions, and slightly delayed flowering time (PubMed:16328792). High light induces rapidly chlorosis in leaves (PubMed:16328792).</text>
</comment>
<comment type="similarity">
    <text evidence="5">Belongs to the ferredoxin thioredoxin reductase alpha subunit family.</text>
</comment>
<proteinExistence type="evidence at transcript level"/>
<reference key="1">
    <citation type="journal article" date="1999" name="DNA Res.">
        <title>Structural analysis of Arabidopsis thaliana chromosome 5. IX. Sequence features of the regions of 1,011,550 bp covered by seventeen P1 and TAC clones.</title>
        <authorList>
            <person name="Kaneko T."/>
            <person name="Katoh T."/>
            <person name="Sato S."/>
            <person name="Nakamura Y."/>
            <person name="Asamizu E."/>
            <person name="Kotani H."/>
            <person name="Miyajima N."/>
            <person name="Tabata S."/>
        </authorList>
    </citation>
    <scope>NUCLEOTIDE SEQUENCE [LARGE SCALE GENOMIC DNA]</scope>
    <source>
        <strain>cv. Columbia</strain>
    </source>
</reference>
<reference key="2">
    <citation type="journal article" date="2017" name="Plant J.">
        <title>Araport11: a complete reannotation of the Arabidopsis thaliana reference genome.</title>
        <authorList>
            <person name="Cheng C.Y."/>
            <person name="Krishnakumar V."/>
            <person name="Chan A.P."/>
            <person name="Thibaud-Nissen F."/>
            <person name="Schobel S."/>
            <person name="Town C.D."/>
        </authorList>
    </citation>
    <scope>GENOME REANNOTATION</scope>
    <source>
        <strain>cv. Columbia</strain>
    </source>
</reference>
<reference key="3">
    <citation type="submission" date="2004-03" db="EMBL/GenBank/DDBJ databases">
        <title>Arabidopsis ORF clones.</title>
        <authorList>
            <person name="Kim C.J."/>
            <person name="Chen H."/>
            <person name="Cheuk R.F."/>
            <person name="Shinn P."/>
            <person name="Carninci P."/>
            <person name="Hayashizaki Y."/>
            <person name="Ishida J."/>
            <person name="Kamiya A."/>
            <person name="Kawai J."/>
            <person name="Narusaka M."/>
            <person name="Sakurai T."/>
            <person name="Satou M."/>
            <person name="Seki M."/>
            <person name="Shinozaki K."/>
            <person name="Ecker J.R."/>
        </authorList>
    </citation>
    <scope>NUCLEOTIDE SEQUENCE [LARGE SCALE MRNA]</scope>
    <source>
        <strain>cv. Columbia</strain>
    </source>
</reference>
<reference key="4">
    <citation type="submission" date="2005-03" db="EMBL/GenBank/DDBJ databases">
        <title>Large-scale analysis of RIKEN Arabidopsis full-length (RAFL) cDNAs.</title>
        <authorList>
            <person name="Totoki Y."/>
            <person name="Seki M."/>
            <person name="Ishida J."/>
            <person name="Nakajima M."/>
            <person name="Enju A."/>
            <person name="Kamiya A."/>
            <person name="Narusaka M."/>
            <person name="Shin-i T."/>
            <person name="Nakagawa M."/>
            <person name="Sakamoto N."/>
            <person name="Oishi K."/>
            <person name="Kohara Y."/>
            <person name="Kobayashi M."/>
            <person name="Toyoda A."/>
            <person name="Sakaki Y."/>
            <person name="Sakurai T."/>
            <person name="Iida K."/>
            <person name="Akiyama K."/>
            <person name="Satou M."/>
            <person name="Toyoda T."/>
            <person name="Konagaya A."/>
            <person name="Carninci P."/>
            <person name="Kawai J."/>
            <person name="Hayashizaki Y."/>
            <person name="Shinozaki K."/>
        </authorList>
    </citation>
    <scope>NUCLEOTIDE SEQUENCE [LARGE SCALE MRNA]</scope>
    <source>
        <strain>cv. Columbia</strain>
    </source>
</reference>
<reference key="5">
    <citation type="journal article" date="2004" name="Photosyn. Res.">
        <title>Characterization of Arabidopsis mutants for the variable subunit of ferredoxin:thioredoxin reductase.</title>
        <authorList>
            <person name="Keryer E."/>
            <person name="Collin V."/>
            <person name="Lavergne D."/>
            <person name="Lemaire S."/>
            <person name="Issakidis-Bourguet E."/>
        </authorList>
    </citation>
    <scope>DISRUPTION PHENOTYPE</scope>
    <scope>GENE FAMILY</scope>
    <scope>NOMENCLATURE</scope>
    <source>
        <strain>cv. Wassilewskija</strain>
    </source>
</reference>
<sequence length="182" mass="19825">MSSQIALSPAIAAAIRRPSSHDCLSASATTATATPMALKSCIVAPLSLFTSQSQIKHSSSRKTSRTTIRCDVAIKSADSINADANPSSSPSSEEEIEAEAKAKIGSRVRVTAPLKVYHVNRVPEVDLEGMEGKLKDYVAVWKGKRISANLPYKIEFFKEIEGRGLVKFVSHLKEDEFEFIDQ</sequence>
<gene>
    <name evidence="4" type="primary">FTRA1</name>
    <name evidence="6" type="ordered locus">At5g23440</name>
    <name evidence="7" type="ORF">K19M13.7</name>
</gene>
<keyword id="KW-0150">Chloroplast</keyword>
<keyword id="KW-0560">Oxidoreductase</keyword>
<keyword id="KW-0934">Plastid</keyword>
<keyword id="KW-1185">Reference proteome</keyword>
<keyword id="KW-0809">Transit peptide</keyword>
<organism>
    <name type="scientific">Arabidopsis thaliana</name>
    <name type="common">Mouse-ear cress</name>
    <dbReference type="NCBI Taxonomy" id="3702"/>
    <lineage>
        <taxon>Eukaryota</taxon>
        <taxon>Viridiplantae</taxon>
        <taxon>Streptophyta</taxon>
        <taxon>Embryophyta</taxon>
        <taxon>Tracheophyta</taxon>
        <taxon>Spermatophyta</taxon>
        <taxon>Magnoliopsida</taxon>
        <taxon>eudicotyledons</taxon>
        <taxon>Gunneridae</taxon>
        <taxon>Pentapetalae</taxon>
        <taxon>rosids</taxon>
        <taxon>malvids</taxon>
        <taxon>Brassicales</taxon>
        <taxon>Brassicaceae</taxon>
        <taxon>Camelineae</taxon>
        <taxon>Arabidopsis</taxon>
    </lineage>
</organism>
<dbReference type="EMBL" id="AB018110">
    <property type="protein sequence ID" value="BAB09560.1"/>
    <property type="molecule type" value="Genomic_DNA"/>
</dbReference>
<dbReference type="EMBL" id="CP002688">
    <property type="protein sequence ID" value="AED93168.1"/>
    <property type="molecule type" value="Genomic_DNA"/>
</dbReference>
<dbReference type="EMBL" id="BT012165">
    <property type="protein sequence ID" value="AAS76260.1"/>
    <property type="molecule type" value="mRNA"/>
</dbReference>
<dbReference type="EMBL" id="AK221457">
    <property type="protein sequence ID" value="BAD94540.1"/>
    <property type="molecule type" value="mRNA"/>
</dbReference>
<dbReference type="RefSeq" id="NP_197735.1">
    <property type="nucleotide sequence ID" value="NM_122251.5"/>
</dbReference>
<dbReference type="SMR" id="Q9FHL4"/>
<dbReference type="FunCoup" id="Q9FHL4">
    <property type="interactions" value="992"/>
</dbReference>
<dbReference type="STRING" id="3702.Q9FHL4"/>
<dbReference type="PaxDb" id="3702-AT5G23440.1"/>
<dbReference type="ProteomicsDB" id="191830"/>
<dbReference type="EnsemblPlants" id="AT5G23440.1">
    <property type="protein sequence ID" value="AT5G23440.1"/>
    <property type="gene ID" value="AT5G23440"/>
</dbReference>
<dbReference type="GeneID" id="832410"/>
<dbReference type="Gramene" id="AT5G23440.1">
    <property type="protein sequence ID" value="AT5G23440.1"/>
    <property type="gene ID" value="AT5G23440"/>
</dbReference>
<dbReference type="KEGG" id="ath:AT5G23440"/>
<dbReference type="Araport" id="AT5G23440"/>
<dbReference type="TAIR" id="AT5G23440">
    <property type="gene designation" value="FTRA1"/>
</dbReference>
<dbReference type="eggNOG" id="KOG2672">
    <property type="taxonomic scope" value="Eukaryota"/>
</dbReference>
<dbReference type="HOGENOM" id="CLU_115599_1_0_1"/>
<dbReference type="InParanoid" id="Q9FHL4"/>
<dbReference type="OMA" id="GRISCEV"/>
<dbReference type="PRO" id="PR:Q9FHL4"/>
<dbReference type="Proteomes" id="UP000006548">
    <property type="component" value="Chromosome 5"/>
</dbReference>
<dbReference type="ExpressionAtlas" id="Q9FHL4">
    <property type="expression patterns" value="baseline and differential"/>
</dbReference>
<dbReference type="GO" id="GO:0009507">
    <property type="term" value="C:chloroplast"/>
    <property type="evidence" value="ECO:0007005"/>
    <property type="project" value="TAIR"/>
</dbReference>
<dbReference type="GO" id="GO:0016491">
    <property type="term" value="F:oxidoreductase activity"/>
    <property type="evidence" value="ECO:0007669"/>
    <property type="project" value="UniProtKB-KW"/>
</dbReference>
<dbReference type="GO" id="GO:0015979">
    <property type="term" value="P:photosynthesis"/>
    <property type="evidence" value="ECO:0007669"/>
    <property type="project" value="InterPro"/>
</dbReference>
<dbReference type="FunFam" id="2.30.30.50:FF:000002">
    <property type="entry name" value="Ferredoxin-thioredoxin reductase, variable chain"/>
    <property type="match status" value="1"/>
</dbReference>
<dbReference type="Gene3D" id="2.30.30.50">
    <property type="match status" value="1"/>
</dbReference>
<dbReference type="InterPro" id="IPR008990">
    <property type="entry name" value="Elect_transpt_acc-like_dom_sf"/>
</dbReference>
<dbReference type="InterPro" id="IPR004207">
    <property type="entry name" value="Fd_thioredoxin_Rdtase_alpha"/>
</dbReference>
<dbReference type="InterPro" id="IPR044166">
    <property type="entry name" value="FTRV"/>
</dbReference>
<dbReference type="PANTHER" id="PTHR46937:SF4">
    <property type="entry name" value="FERREDOXIN-THIOREDOXIN REDUCTASE SUBUNIT A1, CHLOROPLASTIC"/>
    <property type="match status" value="1"/>
</dbReference>
<dbReference type="PANTHER" id="PTHR46937">
    <property type="entry name" value="FERREDOXIN-THIOREDOXIN REDUCTASE, VARIABLE CHAIN"/>
    <property type="match status" value="1"/>
</dbReference>
<dbReference type="Pfam" id="PF02941">
    <property type="entry name" value="FeThRed_A"/>
    <property type="match status" value="1"/>
</dbReference>
<dbReference type="SUPFAM" id="SSF50090">
    <property type="entry name" value="Electron transport accessory proteins"/>
    <property type="match status" value="1"/>
</dbReference>
<protein>
    <recommendedName>
        <fullName>Ferredoxin-thioredoxin reductase subunit A1, chloroplastic</fullName>
        <shortName evidence="4">FTR-A1</shortName>
    </recommendedName>
    <alternativeName>
        <fullName>Ferredoxin-thioredoxin reductase, variable chain FTRA1</fullName>
        <shortName evidence="5">FTR-V 1</shortName>
    </alternativeName>
</protein>
<name>FTRA1_ARATH</name>
<feature type="transit peptide" description="Chloroplast" evidence="2">
    <location>
        <begin position="1"/>
        <end position="81"/>
    </location>
</feature>
<feature type="chain" id="PRO_0000457111" description="Ferredoxin-thioredoxin reductase subunit A1, chloroplastic">
    <location>
        <begin position="82"/>
        <end position="182"/>
    </location>
</feature>
<accession>Q9FHL4</accession>
<evidence type="ECO:0000250" key="1">
    <source>
        <dbReference type="UniProtKB" id="P80680"/>
    </source>
</evidence>
<evidence type="ECO:0000255" key="2"/>
<evidence type="ECO:0000269" key="3">
    <source>
    </source>
</evidence>
<evidence type="ECO:0000303" key="4">
    <source>
    </source>
</evidence>
<evidence type="ECO:0000305" key="5"/>
<evidence type="ECO:0000312" key="6">
    <source>
        <dbReference type="Araport" id="AT5G23440"/>
    </source>
</evidence>
<evidence type="ECO:0000312" key="7">
    <source>
        <dbReference type="EMBL" id="BAB09560.1"/>
    </source>
</evidence>